<protein>
    <recommendedName>
        <fullName>DNA mismatch repair protein MutS</fullName>
    </recommendedName>
</protein>
<comment type="function">
    <text evidence="1">This protein is involved in the repair of mismatches in DNA. It is possible that it carries out the mismatch recognition step. This protein has a weak ATPase activity (By similarity).</text>
</comment>
<comment type="similarity">
    <text evidence="3">Belongs to the DNA mismatch repair MutS family.</text>
</comment>
<sequence>MTQKLTPMMQQWHQCKEQAGDCLLLFRLGEFYEAFFDDALVLAQNLDITLTQRQNIPMSGIPAAYLDGYVDRLVSRGFKIAIAEQADNSEGGKGLVPRTINRLITPGALLSSSLLPEKANNYIIAISQVGSLYGLSCLDLSTGTFLVAEYDNTKDLIEAVYRLAPTELLSHAKFYQKNEPVVKQLQQHLRITLSEHVSWAFEYQSATKKLYTCFQVSSLDGFGLQGLVPAINAAGALLSYIQDKLLLPISHLSIPKIYGQHKHLLIDKASQTNLELLSAIHGEHGKGSLLQVMERTSTPMGGRLLRNTLVNPFYDLKEITLRQDSVEFFLKQEPLRKTLKRHLSCVRDLERLATKISTTLASPKDIGMLRDSLLSCMHIAHDLQSYTLPEFLTNKCLISSSLKSLIEALSTDLLQELPLKVSEGNIFADHYHQDLLRLRNIKTNSKSWILEYQERIRQETGIKKLKVCYAQALGYYIEVASSFAPQLPKEFIRRQSRLHAERFTTQELQQFQDEVFSVEDKLQTLETKLFKELCCYILQHRDLILELSTTIADLDYVISLAELAAEYDYRRPLVDHSDALSITKGMHPVALTLLDRGTFIPNDTIMHSAQTRMILLTGPNMAGKSTYIRQIALLVIMAQMGSFIPARSAHIGIIDKIFTRIGAGDNLSKGMSTFMVEMAETANILHNATDRSLVILDEVGRGTSTYDGLAIAQAVVEFLLFTEGKKAKTLFATHYKELTELELHCQHVENFHAVVKENGGQPVFMYEIAKGHSKKSFGIHVAKLAGFPLSVVSRAQQILHQFEGPDLRPEPEKAQQLVMF</sequence>
<dbReference type="EMBL" id="AE002160">
    <property type="protein sequence ID" value="AAF39048.1"/>
    <property type="molecule type" value="Genomic_DNA"/>
</dbReference>
<dbReference type="PIR" id="G81733">
    <property type="entry name" value="G81733"/>
</dbReference>
<dbReference type="RefSeq" id="WP_010229708.1">
    <property type="nucleotide sequence ID" value="NZ_CP063055.1"/>
</dbReference>
<dbReference type="SMR" id="Q9PLD0"/>
<dbReference type="GeneID" id="1246299"/>
<dbReference type="KEGG" id="cmu:TC_0174"/>
<dbReference type="eggNOG" id="COG0249">
    <property type="taxonomic scope" value="Bacteria"/>
</dbReference>
<dbReference type="HOGENOM" id="CLU_002472_4_0_0"/>
<dbReference type="OrthoDB" id="9802448at2"/>
<dbReference type="Proteomes" id="UP000000800">
    <property type="component" value="Chromosome"/>
</dbReference>
<dbReference type="GO" id="GO:0005829">
    <property type="term" value="C:cytosol"/>
    <property type="evidence" value="ECO:0007669"/>
    <property type="project" value="TreeGrafter"/>
</dbReference>
<dbReference type="GO" id="GO:0005524">
    <property type="term" value="F:ATP binding"/>
    <property type="evidence" value="ECO:0007669"/>
    <property type="project" value="UniProtKB-UniRule"/>
</dbReference>
<dbReference type="GO" id="GO:0140664">
    <property type="term" value="F:ATP-dependent DNA damage sensor activity"/>
    <property type="evidence" value="ECO:0007669"/>
    <property type="project" value="InterPro"/>
</dbReference>
<dbReference type="GO" id="GO:0003684">
    <property type="term" value="F:damaged DNA binding"/>
    <property type="evidence" value="ECO:0007669"/>
    <property type="project" value="UniProtKB-UniRule"/>
</dbReference>
<dbReference type="GO" id="GO:0030983">
    <property type="term" value="F:mismatched DNA binding"/>
    <property type="evidence" value="ECO:0007669"/>
    <property type="project" value="InterPro"/>
</dbReference>
<dbReference type="GO" id="GO:0006298">
    <property type="term" value="P:mismatch repair"/>
    <property type="evidence" value="ECO:0007669"/>
    <property type="project" value="UniProtKB-UniRule"/>
</dbReference>
<dbReference type="CDD" id="cd03284">
    <property type="entry name" value="ABC_MutS1"/>
    <property type="match status" value="1"/>
</dbReference>
<dbReference type="FunFam" id="3.40.50.300:FF:002842">
    <property type="entry name" value="DNA mismatch repair protein MutS"/>
    <property type="match status" value="1"/>
</dbReference>
<dbReference type="Gene3D" id="1.10.1420.10">
    <property type="match status" value="2"/>
</dbReference>
<dbReference type="Gene3D" id="3.40.1170.10">
    <property type="entry name" value="DNA repair protein MutS, domain I"/>
    <property type="match status" value="1"/>
</dbReference>
<dbReference type="Gene3D" id="3.30.420.110">
    <property type="entry name" value="MutS, connector domain"/>
    <property type="match status" value="1"/>
</dbReference>
<dbReference type="Gene3D" id="3.40.50.300">
    <property type="entry name" value="P-loop containing nucleotide triphosphate hydrolases"/>
    <property type="match status" value="1"/>
</dbReference>
<dbReference type="HAMAP" id="MF_00096">
    <property type="entry name" value="MutS"/>
    <property type="match status" value="1"/>
</dbReference>
<dbReference type="InterPro" id="IPR005748">
    <property type="entry name" value="DNA_mismatch_repair_MutS"/>
</dbReference>
<dbReference type="InterPro" id="IPR007695">
    <property type="entry name" value="DNA_mismatch_repair_MutS-lik_N"/>
</dbReference>
<dbReference type="InterPro" id="IPR017261">
    <property type="entry name" value="DNA_mismatch_repair_MutS/MSH"/>
</dbReference>
<dbReference type="InterPro" id="IPR000432">
    <property type="entry name" value="DNA_mismatch_repair_MutS_C"/>
</dbReference>
<dbReference type="InterPro" id="IPR007861">
    <property type="entry name" value="DNA_mismatch_repair_MutS_clamp"/>
</dbReference>
<dbReference type="InterPro" id="IPR007696">
    <property type="entry name" value="DNA_mismatch_repair_MutS_core"/>
</dbReference>
<dbReference type="InterPro" id="IPR016151">
    <property type="entry name" value="DNA_mismatch_repair_MutS_N"/>
</dbReference>
<dbReference type="InterPro" id="IPR036187">
    <property type="entry name" value="DNA_mismatch_repair_MutS_sf"/>
</dbReference>
<dbReference type="InterPro" id="IPR007860">
    <property type="entry name" value="DNA_mmatch_repair_MutS_con_dom"/>
</dbReference>
<dbReference type="InterPro" id="IPR045076">
    <property type="entry name" value="MutS"/>
</dbReference>
<dbReference type="InterPro" id="IPR036678">
    <property type="entry name" value="MutS_con_dom_sf"/>
</dbReference>
<dbReference type="InterPro" id="IPR027417">
    <property type="entry name" value="P-loop_NTPase"/>
</dbReference>
<dbReference type="NCBIfam" id="TIGR01070">
    <property type="entry name" value="mutS1"/>
    <property type="match status" value="1"/>
</dbReference>
<dbReference type="NCBIfam" id="NF003810">
    <property type="entry name" value="PRK05399.1"/>
    <property type="match status" value="1"/>
</dbReference>
<dbReference type="PANTHER" id="PTHR11361:SF34">
    <property type="entry name" value="DNA MISMATCH REPAIR PROTEIN MSH1, MITOCHONDRIAL"/>
    <property type="match status" value="1"/>
</dbReference>
<dbReference type="PANTHER" id="PTHR11361">
    <property type="entry name" value="DNA MISMATCH REPAIR PROTEIN MUTS FAMILY MEMBER"/>
    <property type="match status" value="1"/>
</dbReference>
<dbReference type="Pfam" id="PF01624">
    <property type="entry name" value="MutS_I"/>
    <property type="match status" value="1"/>
</dbReference>
<dbReference type="Pfam" id="PF05188">
    <property type="entry name" value="MutS_II"/>
    <property type="match status" value="1"/>
</dbReference>
<dbReference type="Pfam" id="PF05192">
    <property type="entry name" value="MutS_III"/>
    <property type="match status" value="1"/>
</dbReference>
<dbReference type="Pfam" id="PF05190">
    <property type="entry name" value="MutS_IV"/>
    <property type="match status" value="1"/>
</dbReference>
<dbReference type="Pfam" id="PF00488">
    <property type="entry name" value="MutS_V"/>
    <property type="match status" value="1"/>
</dbReference>
<dbReference type="PIRSF" id="PIRSF037677">
    <property type="entry name" value="DNA_mis_repair_Msh6"/>
    <property type="match status" value="1"/>
</dbReference>
<dbReference type="SMART" id="SM00534">
    <property type="entry name" value="MUTSac"/>
    <property type="match status" value="1"/>
</dbReference>
<dbReference type="SMART" id="SM00533">
    <property type="entry name" value="MUTSd"/>
    <property type="match status" value="1"/>
</dbReference>
<dbReference type="SUPFAM" id="SSF55271">
    <property type="entry name" value="DNA repair protein MutS, domain I"/>
    <property type="match status" value="1"/>
</dbReference>
<dbReference type="SUPFAM" id="SSF53150">
    <property type="entry name" value="DNA repair protein MutS, domain II"/>
    <property type="match status" value="1"/>
</dbReference>
<dbReference type="SUPFAM" id="SSF48334">
    <property type="entry name" value="DNA repair protein MutS, domain III"/>
    <property type="match status" value="1"/>
</dbReference>
<dbReference type="SUPFAM" id="SSF52540">
    <property type="entry name" value="P-loop containing nucleoside triphosphate hydrolases"/>
    <property type="match status" value="1"/>
</dbReference>
<dbReference type="PROSITE" id="PS00486">
    <property type="entry name" value="DNA_MISMATCH_REPAIR_2"/>
    <property type="match status" value="1"/>
</dbReference>
<keyword id="KW-0067">ATP-binding</keyword>
<keyword id="KW-0227">DNA damage</keyword>
<keyword id="KW-0234">DNA repair</keyword>
<keyword id="KW-0238">DNA-binding</keyword>
<keyword id="KW-0547">Nucleotide-binding</keyword>
<organism>
    <name type="scientific">Chlamydia muridarum (strain MoPn / Nigg)</name>
    <dbReference type="NCBI Taxonomy" id="243161"/>
    <lineage>
        <taxon>Bacteria</taxon>
        <taxon>Pseudomonadati</taxon>
        <taxon>Chlamydiota</taxon>
        <taxon>Chlamydiia</taxon>
        <taxon>Chlamydiales</taxon>
        <taxon>Chlamydiaceae</taxon>
        <taxon>Chlamydia/Chlamydophila group</taxon>
        <taxon>Chlamydia</taxon>
    </lineage>
</organism>
<name>MUTS_CHLMU</name>
<proteinExistence type="inferred from homology"/>
<feature type="chain" id="PRO_0000115084" description="DNA mismatch repair protein MutS">
    <location>
        <begin position="1"/>
        <end position="820"/>
    </location>
</feature>
<feature type="binding site" evidence="2">
    <location>
        <begin position="618"/>
        <end position="625"/>
    </location>
    <ligand>
        <name>ATP</name>
        <dbReference type="ChEBI" id="CHEBI:30616"/>
    </ligand>
</feature>
<evidence type="ECO:0000250" key="1"/>
<evidence type="ECO:0000255" key="2"/>
<evidence type="ECO:0000305" key="3"/>
<gene>
    <name type="primary">mutS</name>
    <name type="ordered locus">TC_0174</name>
</gene>
<reference key="1">
    <citation type="journal article" date="2000" name="Nucleic Acids Res.">
        <title>Genome sequences of Chlamydia trachomatis MoPn and Chlamydia pneumoniae AR39.</title>
        <authorList>
            <person name="Read T.D."/>
            <person name="Brunham R.C."/>
            <person name="Shen C."/>
            <person name="Gill S.R."/>
            <person name="Heidelberg J.F."/>
            <person name="White O."/>
            <person name="Hickey E.K."/>
            <person name="Peterson J.D."/>
            <person name="Utterback T.R."/>
            <person name="Berry K.J."/>
            <person name="Bass S."/>
            <person name="Linher K.D."/>
            <person name="Weidman J.F."/>
            <person name="Khouri H.M."/>
            <person name="Craven B."/>
            <person name="Bowman C."/>
            <person name="Dodson R.J."/>
            <person name="Gwinn M.L."/>
            <person name="Nelson W.C."/>
            <person name="DeBoy R.T."/>
            <person name="Kolonay J.F."/>
            <person name="McClarty G."/>
            <person name="Salzberg S.L."/>
            <person name="Eisen J.A."/>
            <person name="Fraser C.M."/>
        </authorList>
    </citation>
    <scope>NUCLEOTIDE SEQUENCE [LARGE SCALE GENOMIC DNA]</scope>
    <source>
        <strain>MoPn / Nigg</strain>
    </source>
</reference>
<accession>Q9PLD0</accession>